<accession>Q32KU4</accession>
<reference key="1">
    <citation type="submission" date="2005-11" db="EMBL/GenBank/DDBJ databases">
        <authorList>
            <consortium name="NIH - Mammalian Gene Collection (MGC) project"/>
        </authorList>
    </citation>
    <scope>NUCLEOTIDE SEQUENCE [LARGE SCALE MRNA]</scope>
    <source>
        <strain>Crossbred X Angus</strain>
        <tissue>Liver</tissue>
    </source>
</reference>
<gene>
    <name type="primary">IQCF5</name>
</gene>
<proteinExistence type="evidence at transcript level"/>
<protein>
    <recommendedName>
        <fullName>IQ domain-containing protein F5</fullName>
    </recommendedName>
</protein>
<organism>
    <name type="scientific">Bos taurus</name>
    <name type="common">Bovine</name>
    <dbReference type="NCBI Taxonomy" id="9913"/>
    <lineage>
        <taxon>Eukaryota</taxon>
        <taxon>Metazoa</taxon>
        <taxon>Chordata</taxon>
        <taxon>Craniata</taxon>
        <taxon>Vertebrata</taxon>
        <taxon>Euteleostomi</taxon>
        <taxon>Mammalia</taxon>
        <taxon>Eutheria</taxon>
        <taxon>Laurasiatheria</taxon>
        <taxon>Artiodactyla</taxon>
        <taxon>Ruminantia</taxon>
        <taxon>Pecora</taxon>
        <taxon>Bovidae</taxon>
        <taxon>Bovinae</taxon>
        <taxon>Bos</taxon>
    </lineage>
</organism>
<feature type="chain" id="PRO_0000345955" description="IQ domain-containing protein F5">
    <location>
        <begin position="1"/>
        <end position="149"/>
    </location>
</feature>
<feature type="domain" description="IQ 1" evidence="1">
    <location>
        <begin position="12"/>
        <end position="41"/>
    </location>
</feature>
<feature type="domain" description="IQ 2" evidence="1">
    <location>
        <begin position="68"/>
        <end position="97"/>
    </location>
</feature>
<sequence>MGPKVRIMRKEENKAIVSIQAWWRGTLVRRTLLHAALRAWIIQCWWKQKLVLLMENRRRVALDAFARQEWAVVKLQSWVRMWCIRLRYLRLLHAVRIIQVYWRWHSCHTRGFIQGHYDLKENQLNLQLEISLGSQACRVQQCIPLPIKE</sequence>
<dbReference type="EMBL" id="BC109926">
    <property type="protein sequence ID" value="AAI09927.1"/>
    <property type="molecule type" value="mRNA"/>
</dbReference>
<dbReference type="RefSeq" id="NP_001070528.1">
    <property type="nucleotide sequence ID" value="NM_001077060.2"/>
</dbReference>
<dbReference type="SMR" id="Q32KU4"/>
<dbReference type="STRING" id="9913.ENSBTAP00000051861"/>
<dbReference type="PaxDb" id="9913-ENSBTAP00000051861"/>
<dbReference type="Ensembl" id="ENSBTAT00000057012.2">
    <property type="protein sequence ID" value="ENSBTAP00000051861.1"/>
    <property type="gene ID" value="ENSBTAG00000040574.2"/>
</dbReference>
<dbReference type="GeneID" id="768000"/>
<dbReference type="KEGG" id="bta:768000"/>
<dbReference type="CTD" id="389124"/>
<dbReference type="VEuPathDB" id="HostDB:ENSBTAG00000040574"/>
<dbReference type="eggNOG" id="ENOG502TCZD">
    <property type="taxonomic scope" value="Eukaryota"/>
</dbReference>
<dbReference type="GeneTree" id="ENSGT00390000004641"/>
<dbReference type="HOGENOM" id="CLU_114989_0_0_1"/>
<dbReference type="InParanoid" id="Q32KU4"/>
<dbReference type="OMA" id="YWRWHIC"/>
<dbReference type="OrthoDB" id="252964at2759"/>
<dbReference type="TreeFam" id="TF337908"/>
<dbReference type="Proteomes" id="UP000009136">
    <property type="component" value="Chromosome 22"/>
</dbReference>
<dbReference type="Bgee" id="ENSBTAG00000040574">
    <property type="expression patterns" value="Expressed in semen and 9 other cell types or tissues"/>
</dbReference>
<dbReference type="GO" id="GO:0005516">
    <property type="term" value="F:calmodulin binding"/>
    <property type="evidence" value="ECO:0000318"/>
    <property type="project" value="GO_Central"/>
</dbReference>
<dbReference type="FunFam" id="1.20.5.190:FF:000014">
    <property type="entry name" value="IQ motif containing F5"/>
    <property type="match status" value="1"/>
</dbReference>
<dbReference type="FunFam" id="1.20.5.190:FF:000015">
    <property type="entry name" value="IQ motif containing F5"/>
    <property type="match status" value="1"/>
</dbReference>
<dbReference type="Gene3D" id="1.20.5.190">
    <property type="match status" value="2"/>
</dbReference>
<dbReference type="InterPro" id="IPR000048">
    <property type="entry name" value="IQ_motif_EF-hand-BS"/>
</dbReference>
<dbReference type="InterPro" id="IPR039887">
    <property type="entry name" value="IQCF"/>
</dbReference>
<dbReference type="PANTHER" id="PTHR21633:SF24">
    <property type="entry name" value="IQ DOMAIN-CONTAINING PROTEIN F5"/>
    <property type="match status" value="1"/>
</dbReference>
<dbReference type="PANTHER" id="PTHR21633">
    <property type="entry name" value="IQ MOTIF CONTAINING F"/>
    <property type="match status" value="1"/>
</dbReference>
<dbReference type="Pfam" id="PF00612">
    <property type="entry name" value="IQ"/>
    <property type="match status" value="2"/>
</dbReference>
<dbReference type="SMART" id="SM00015">
    <property type="entry name" value="IQ"/>
    <property type="match status" value="2"/>
</dbReference>
<dbReference type="PROSITE" id="PS50096">
    <property type="entry name" value="IQ"/>
    <property type="match status" value="2"/>
</dbReference>
<evidence type="ECO:0000255" key="1">
    <source>
        <dbReference type="PROSITE-ProRule" id="PRU00116"/>
    </source>
</evidence>
<keyword id="KW-1185">Reference proteome</keyword>
<keyword id="KW-0677">Repeat</keyword>
<name>IQCF5_BOVIN</name>